<keyword id="KW-0007">Acetylation</keyword>
<keyword id="KW-0963">Cytoplasm</keyword>
<keyword id="KW-0328">Glycosyltransferase</keyword>
<keyword id="KW-0597">Phosphoprotein</keyword>
<keyword id="KW-0660">Purine salvage</keyword>
<keyword id="KW-1185">Reference proteome</keyword>
<keyword id="KW-0808">Transferase</keyword>
<feature type="initiator methionine" description="Removed" evidence="2">
    <location>
        <position position="1"/>
    </location>
</feature>
<feature type="chain" id="PRO_0000149506" description="Adenine phosphoribosyltransferase">
    <location>
        <begin position="2"/>
        <end position="180"/>
    </location>
</feature>
<feature type="modified residue" description="N-acetylserine" evidence="2">
    <location>
        <position position="2"/>
    </location>
</feature>
<feature type="modified residue" description="Phosphoserine" evidence="5">
    <location>
        <position position="15"/>
    </location>
</feature>
<feature type="modified residue" description="Phosphoserine" evidence="1">
    <location>
        <position position="30"/>
    </location>
</feature>
<feature type="modified residue" description="Phosphotyrosine" evidence="1">
    <location>
        <position position="60"/>
    </location>
</feature>
<feature type="modified residue" description="Phosphoserine" evidence="1">
    <location>
        <position position="66"/>
    </location>
</feature>
<feature type="modified residue" description="N6-acetyllysine" evidence="1">
    <location>
        <position position="114"/>
    </location>
</feature>
<feature type="modified residue" description="Phosphothreonine" evidence="1">
    <location>
        <position position="135"/>
    </location>
</feature>
<feature type="sequence conflict" description="In Ref. 3; BAB22029." evidence="3" ref="3">
    <original>LK</original>
    <variation>FE</variation>
    <location>
        <begin position="6"/>
        <end position="7"/>
    </location>
</feature>
<feature type="sequence conflict" description="In Ref. 1; AAA37255." evidence="3" ref="1">
    <original>S</original>
    <variation>V</variation>
    <location>
        <position position="15"/>
    </location>
</feature>
<feature type="sequence conflict" description="In Ref. 3; BAB22029." evidence="3" ref="3">
    <original>V</original>
    <variation>A</variation>
    <location>
        <position position="24"/>
    </location>
</feature>
<feature type="sequence conflict" description="In Ref. 3; BAB22029." evidence="3" ref="3">
    <original>L</original>
    <variation>S</variation>
    <location>
        <position position="46"/>
    </location>
</feature>
<feature type="sequence conflict" description="In Ref. 3; BAB22029." evidence="3" ref="3">
    <original>G</original>
    <variation>A</variation>
    <location>
        <position position="72"/>
    </location>
</feature>
<feature type="sequence conflict" description="In Ref. 7; AAA37256." evidence="3" ref="7">
    <original>K</original>
    <variation>KVR</variation>
    <location>
        <position position="107"/>
    </location>
</feature>
<feature type="sequence conflict" description="In Ref. 2; BAD95572." evidence="3" ref="2">
    <original>T</original>
    <variation>I</variation>
    <location>
        <position position="135"/>
    </location>
</feature>
<gene>
    <name evidence="4" type="primary">Aprt</name>
</gene>
<evidence type="ECO:0000250" key="1">
    <source>
        <dbReference type="UniProtKB" id="P07741"/>
    </source>
</evidence>
<evidence type="ECO:0000250" key="2">
    <source>
        <dbReference type="UniProtKB" id="P36972"/>
    </source>
</evidence>
<evidence type="ECO:0000305" key="3"/>
<evidence type="ECO:0000312" key="4">
    <source>
        <dbReference type="MGI" id="MGI:88061"/>
    </source>
</evidence>
<evidence type="ECO:0007744" key="5">
    <source>
    </source>
</evidence>
<sequence length="180" mass="19724">MSEPELKLVARRIRSFPDFPIPGVLFRDISPLLKDPDSFRASIRLLASHLKSTHSGKIDYIAGLDSRGFLFGPSLAQELGVGCVLIRKQGKLPGPTVSASYSLEYGKAELEIQKDALEPGQRVVIVDDLLATGGTMFAACDLLHQLRAEVVECVSLVELTSLKGRERLGPIPFFSLLQYD</sequence>
<comment type="function">
    <text evidence="1">Catalyzes a salvage reaction resulting in the formation of AMP, that is energically less costly than de novo synthesis.</text>
</comment>
<comment type="catalytic activity">
    <reaction evidence="1">
        <text>AMP + diphosphate = 5-phospho-alpha-D-ribose 1-diphosphate + adenine</text>
        <dbReference type="Rhea" id="RHEA:16609"/>
        <dbReference type="ChEBI" id="CHEBI:16708"/>
        <dbReference type="ChEBI" id="CHEBI:33019"/>
        <dbReference type="ChEBI" id="CHEBI:58017"/>
        <dbReference type="ChEBI" id="CHEBI:456215"/>
        <dbReference type="EC" id="2.4.2.7"/>
    </reaction>
</comment>
<comment type="pathway">
    <text evidence="1">Purine metabolism; AMP biosynthesis via salvage pathway; AMP from adenine: step 1/1.</text>
</comment>
<comment type="subunit">
    <text>Homodimer.</text>
</comment>
<comment type="subcellular location">
    <subcellularLocation>
        <location>Cytoplasm</location>
    </subcellularLocation>
</comment>
<comment type="similarity">
    <text evidence="3">Belongs to the purine/pyrimidine phosphoribosyltransferase family.</text>
</comment>
<organism>
    <name type="scientific">Mus musculus</name>
    <name type="common">Mouse</name>
    <dbReference type="NCBI Taxonomy" id="10090"/>
    <lineage>
        <taxon>Eukaryota</taxon>
        <taxon>Metazoa</taxon>
        <taxon>Chordata</taxon>
        <taxon>Craniata</taxon>
        <taxon>Vertebrata</taxon>
        <taxon>Euteleostomi</taxon>
        <taxon>Mammalia</taxon>
        <taxon>Eutheria</taxon>
        <taxon>Euarchontoglires</taxon>
        <taxon>Glires</taxon>
        <taxon>Rodentia</taxon>
        <taxon>Myomorpha</taxon>
        <taxon>Muroidea</taxon>
        <taxon>Muridae</taxon>
        <taxon>Murinae</taxon>
        <taxon>Mus</taxon>
        <taxon>Mus</taxon>
    </lineage>
</organism>
<protein>
    <recommendedName>
        <fullName evidence="3">Adenine phosphoribosyltransferase</fullName>
        <shortName>APRT</shortName>
        <ecNumber evidence="1">2.4.2.7</ecNumber>
    </recommendedName>
</protein>
<name>APT_MOUSE</name>
<dbReference type="EC" id="2.4.2.7" evidence="1"/>
<dbReference type="EMBL" id="M11310">
    <property type="protein sequence ID" value="AAA37255.1"/>
    <property type="molecule type" value="mRNA"/>
</dbReference>
<dbReference type="EMBL" id="AB033539">
    <property type="protein sequence ID" value="BAD95571.1"/>
    <property type="molecule type" value="mRNA"/>
</dbReference>
<dbReference type="EMBL" id="AB033540">
    <property type="protein sequence ID" value="BAD95572.1"/>
    <property type="molecule type" value="mRNA"/>
</dbReference>
<dbReference type="EMBL" id="AK002350">
    <property type="protein sequence ID" value="BAB22029.1"/>
    <property type="molecule type" value="mRNA"/>
</dbReference>
<dbReference type="EMBL" id="AK153201">
    <property type="protein sequence ID" value="BAE31801.1"/>
    <property type="molecule type" value="mRNA"/>
</dbReference>
<dbReference type="EMBL" id="AC114917">
    <property type="status" value="NOT_ANNOTATED_CDS"/>
    <property type="molecule type" value="Genomic_DNA"/>
</dbReference>
<dbReference type="EMBL" id="CH466525">
    <property type="protein sequence ID" value="EDL11692.1"/>
    <property type="molecule type" value="Genomic_DNA"/>
</dbReference>
<dbReference type="EMBL" id="BC005667">
    <property type="protein sequence ID" value="AAH05667.1"/>
    <property type="molecule type" value="mRNA"/>
</dbReference>
<dbReference type="EMBL" id="M86439">
    <property type="protein sequence ID" value="AAA37256.1"/>
    <property type="molecule type" value="Genomic_DNA"/>
</dbReference>
<dbReference type="CCDS" id="CCDS40503.1"/>
<dbReference type="PIR" id="A22670">
    <property type="entry name" value="RTMSA"/>
</dbReference>
<dbReference type="RefSeq" id="NP_033828.2">
    <property type="nucleotide sequence ID" value="NM_009698.2"/>
</dbReference>
<dbReference type="SMR" id="P08030"/>
<dbReference type="BioGRID" id="198168">
    <property type="interactions" value="5"/>
</dbReference>
<dbReference type="FunCoup" id="P08030">
    <property type="interactions" value="2105"/>
</dbReference>
<dbReference type="IntAct" id="P08030">
    <property type="interactions" value="2"/>
</dbReference>
<dbReference type="STRING" id="10090.ENSMUSP00000006764"/>
<dbReference type="GlyGen" id="P08030">
    <property type="glycosylation" value="1 site"/>
</dbReference>
<dbReference type="iPTMnet" id="P08030"/>
<dbReference type="PhosphoSitePlus" id="P08030"/>
<dbReference type="SwissPalm" id="P08030"/>
<dbReference type="jPOST" id="P08030"/>
<dbReference type="PaxDb" id="10090-ENSMUSP00000006764"/>
<dbReference type="PeptideAtlas" id="P08030"/>
<dbReference type="ProteomicsDB" id="283170"/>
<dbReference type="Pumba" id="P08030"/>
<dbReference type="Antibodypedia" id="17347">
    <property type="antibodies" value="338 antibodies from 32 providers"/>
</dbReference>
<dbReference type="DNASU" id="11821"/>
<dbReference type="Ensembl" id="ENSMUST00000006764.9">
    <property type="protein sequence ID" value="ENSMUSP00000006764.8"/>
    <property type="gene ID" value="ENSMUSG00000006589.9"/>
</dbReference>
<dbReference type="GeneID" id="11821"/>
<dbReference type="KEGG" id="mmu:11821"/>
<dbReference type="UCSC" id="uc009ntf.1">
    <property type="organism name" value="mouse"/>
</dbReference>
<dbReference type="AGR" id="MGI:88061"/>
<dbReference type="CTD" id="353"/>
<dbReference type="MGI" id="MGI:88061">
    <property type="gene designation" value="Aprt"/>
</dbReference>
<dbReference type="VEuPathDB" id="HostDB:ENSMUSG00000006589"/>
<dbReference type="eggNOG" id="KOG1712">
    <property type="taxonomic scope" value="Eukaryota"/>
</dbReference>
<dbReference type="GeneTree" id="ENSGT00390000017259"/>
<dbReference type="HOGENOM" id="CLU_063339_3_2_1"/>
<dbReference type="InParanoid" id="P08030"/>
<dbReference type="OMA" id="QAYDLEY"/>
<dbReference type="OrthoDB" id="363185at2759"/>
<dbReference type="PhylomeDB" id="P08030"/>
<dbReference type="TreeFam" id="TF300227"/>
<dbReference type="Reactome" id="R-MMU-6798695">
    <property type="pathway name" value="Neutrophil degranulation"/>
</dbReference>
<dbReference type="Reactome" id="R-MMU-74217">
    <property type="pathway name" value="Purine salvage"/>
</dbReference>
<dbReference type="UniPathway" id="UPA00588">
    <property type="reaction ID" value="UER00646"/>
</dbReference>
<dbReference type="BioGRID-ORCS" id="11821">
    <property type="hits" value="6 hits in 79 CRISPR screens"/>
</dbReference>
<dbReference type="ChiTaRS" id="Aprt">
    <property type="organism name" value="mouse"/>
</dbReference>
<dbReference type="PRO" id="PR:P08030"/>
<dbReference type="Proteomes" id="UP000000589">
    <property type="component" value="Chromosome 8"/>
</dbReference>
<dbReference type="RNAct" id="P08030">
    <property type="molecule type" value="protein"/>
</dbReference>
<dbReference type="Bgee" id="ENSMUSG00000006589">
    <property type="expression patterns" value="Expressed in ectoplacental cone and 270 other cell types or tissues"/>
</dbReference>
<dbReference type="ExpressionAtlas" id="P08030">
    <property type="expression patterns" value="baseline and differential"/>
</dbReference>
<dbReference type="GO" id="GO:0005829">
    <property type="term" value="C:cytosol"/>
    <property type="evidence" value="ECO:0000314"/>
    <property type="project" value="MGI"/>
</dbReference>
<dbReference type="GO" id="GO:0005654">
    <property type="term" value="C:nucleoplasm"/>
    <property type="evidence" value="ECO:0007669"/>
    <property type="project" value="Ensembl"/>
</dbReference>
<dbReference type="GO" id="GO:0002055">
    <property type="term" value="F:adenine binding"/>
    <property type="evidence" value="ECO:0000314"/>
    <property type="project" value="MGI"/>
</dbReference>
<dbReference type="GO" id="GO:0003999">
    <property type="term" value="F:adenine phosphoribosyltransferase activity"/>
    <property type="evidence" value="ECO:0000314"/>
    <property type="project" value="MGI"/>
</dbReference>
<dbReference type="GO" id="GO:0016208">
    <property type="term" value="F:AMP binding"/>
    <property type="evidence" value="ECO:0000266"/>
    <property type="project" value="MGI"/>
</dbReference>
<dbReference type="GO" id="GO:0046083">
    <property type="term" value="P:adenine metabolic process"/>
    <property type="evidence" value="ECO:0000315"/>
    <property type="project" value="MGI"/>
</dbReference>
<dbReference type="GO" id="GO:0006168">
    <property type="term" value="P:adenine salvage"/>
    <property type="evidence" value="ECO:0007669"/>
    <property type="project" value="InterPro"/>
</dbReference>
<dbReference type="GO" id="GO:0044209">
    <property type="term" value="P:AMP salvage"/>
    <property type="evidence" value="ECO:0000314"/>
    <property type="project" value="MGI"/>
</dbReference>
<dbReference type="GO" id="GO:0032263">
    <property type="term" value="P:GMP salvage"/>
    <property type="evidence" value="ECO:0000314"/>
    <property type="project" value="MGI"/>
</dbReference>
<dbReference type="GO" id="GO:0007625">
    <property type="term" value="P:grooming behavior"/>
    <property type="evidence" value="ECO:0000316"/>
    <property type="project" value="MGI"/>
</dbReference>
<dbReference type="GO" id="GO:0032264">
    <property type="term" value="P:IMP salvage"/>
    <property type="evidence" value="ECO:0000315"/>
    <property type="project" value="MGI"/>
</dbReference>
<dbReference type="GO" id="GO:0006166">
    <property type="term" value="P:purine ribonucleoside salvage"/>
    <property type="evidence" value="ECO:0000315"/>
    <property type="project" value="MGI"/>
</dbReference>
<dbReference type="CDD" id="cd06223">
    <property type="entry name" value="PRTases_typeI"/>
    <property type="match status" value="1"/>
</dbReference>
<dbReference type="FunFam" id="3.40.50.2020:FF:000123">
    <property type="entry name" value="Adenine phosphoribosyltransferase"/>
    <property type="match status" value="1"/>
</dbReference>
<dbReference type="Gene3D" id="3.40.50.2020">
    <property type="match status" value="1"/>
</dbReference>
<dbReference type="HAMAP" id="MF_00004">
    <property type="entry name" value="Aden_phosphoribosyltr"/>
    <property type="match status" value="1"/>
</dbReference>
<dbReference type="InterPro" id="IPR005764">
    <property type="entry name" value="Ade_phspho_trans"/>
</dbReference>
<dbReference type="InterPro" id="IPR000836">
    <property type="entry name" value="PRibTrfase_dom"/>
</dbReference>
<dbReference type="InterPro" id="IPR029057">
    <property type="entry name" value="PRTase-like"/>
</dbReference>
<dbReference type="InterPro" id="IPR050054">
    <property type="entry name" value="UPRTase/APRTase"/>
</dbReference>
<dbReference type="NCBIfam" id="TIGR01090">
    <property type="entry name" value="apt"/>
    <property type="match status" value="1"/>
</dbReference>
<dbReference type="NCBIfam" id="NF002634">
    <property type="entry name" value="PRK02304.1-3"/>
    <property type="match status" value="1"/>
</dbReference>
<dbReference type="NCBIfam" id="NF002636">
    <property type="entry name" value="PRK02304.1-5"/>
    <property type="match status" value="1"/>
</dbReference>
<dbReference type="PANTHER" id="PTHR32315">
    <property type="entry name" value="ADENINE PHOSPHORIBOSYLTRANSFERASE"/>
    <property type="match status" value="1"/>
</dbReference>
<dbReference type="PANTHER" id="PTHR32315:SF3">
    <property type="entry name" value="ADENINE PHOSPHORIBOSYLTRANSFERASE"/>
    <property type="match status" value="1"/>
</dbReference>
<dbReference type="Pfam" id="PF00156">
    <property type="entry name" value="Pribosyltran"/>
    <property type="match status" value="1"/>
</dbReference>
<dbReference type="SUPFAM" id="SSF53271">
    <property type="entry name" value="PRTase-like"/>
    <property type="match status" value="1"/>
</dbReference>
<dbReference type="PROSITE" id="PS00103">
    <property type="entry name" value="PUR_PYR_PR_TRANSFER"/>
    <property type="match status" value="1"/>
</dbReference>
<reference key="1">
    <citation type="journal article" date="1985" name="Proc. Natl. Acad. Sci. U.S.A.">
        <title>Nucleotide sequence and organization of the mouse adenine phosphoribosyltransferase gene: presence of a coding region common to animal and bacterial phosphoribosyltransferases that has a variable intron/exon arrangement.</title>
        <authorList>
            <person name="Dush M.K."/>
            <person name="Sikela J.M."/>
            <person name="Khan S.A."/>
            <person name="Tischfield J.A."/>
            <person name="Stambrook P.J."/>
        </authorList>
    </citation>
    <scope>NUCLEOTIDE SEQUENCE [MRNA]</scope>
</reference>
<reference key="2">
    <citation type="submission" date="1999-10" db="EMBL/GenBank/DDBJ databases">
        <title>mRNA aprt (wild-type allele) in murine SR-1 cell line.</title>
        <authorList>
            <person name="Fujimori A."/>
        </authorList>
    </citation>
    <scope>NUCLEOTIDE SEQUENCE [MRNA]</scope>
    <source>
        <tissue>Carcinoma</tissue>
    </source>
</reference>
<reference key="3">
    <citation type="journal article" date="2005" name="Science">
        <title>The transcriptional landscape of the mammalian genome.</title>
        <authorList>
            <person name="Carninci P."/>
            <person name="Kasukawa T."/>
            <person name="Katayama S."/>
            <person name="Gough J."/>
            <person name="Frith M.C."/>
            <person name="Maeda N."/>
            <person name="Oyama R."/>
            <person name="Ravasi T."/>
            <person name="Lenhard B."/>
            <person name="Wells C."/>
            <person name="Kodzius R."/>
            <person name="Shimokawa K."/>
            <person name="Bajic V.B."/>
            <person name="Brenner S.E."/>
            <person name="Batalov S."/>
            <person name="Forrest A.R."/>
            <person name="Zavolan M."/>
            <person name="Davis M.J."/>
            <person name="Wilming L.G."/>
            <person name="Aidinis V."/>
            <person name="Allen J.E."/>
            <person name="Ambesi-Impiombato A."/>
            <person name="Apweiler R."/>
            <person name="Aturaliya R.N."/>
            <person name="Bailey T.L."/>
            <person name="Bansal M."/>
            <person name="Baxter L."/>
            <person name="Beisel K.W."/>
            <person name="Bersano T."/>
            <person name="Bono H."/>
            <person name="Chalk A.M."/>
            <person name="Chiu K.P."/>
            <person name="Choudhary V."/>
            <person name="Christoffels A."/>
            <person name="Clutterbuck D.R."/>
            <person name="Crowe M.L."/>
            <person name="Dalla E."/>
            <person name="Dalrymple B.P."/>
            <person name="de Bono B."/>
            <person name="Della Gatta G."/>
            <person name="di Bernardo D."/>
            <person name="Down T."/>
            <person name="Engstrom P."/>
            <person name="Fagiolini M."/>
            <person name="Faulkner G."/>
            <person name="Fletcher C.F."/>
            <person name="Fukushima T."/>
            <person name="Furuno M."/>
            <person name="Futaki S."/>
            <person name="Gariboldi M."/>
            <person name="Georgii-Hemming P."/>
            <person name="Gingeras T.R."/>
            <person name="Gojobori T."/>
            <person name="Green R.E."/>
            <person name="Gustincich S."/>
            <person name="Harbers M."/>
            <person name="Hayashi Y."/>
            <person name="Hensch T.K."/>
            <person name="Hirokawa N."/>
            <person name="Hill D."/>
            <person name="Huminiecki L."/>
            <person name="Iacono M."/>
            <person name="Ikeo K."/>
            <person name="Iwama A."/>
            <person name="Ishikawa T."/>
            <person name="Jakt M."/>
            <person name="Kanapin A."/>
            <person name="Katoh M."/>
            <person name="Kawasawa Y."/>
            <person name="Kelso J."/>
            <person name="Kitamura H."/>
            <person name="Kitano H."/>
            <person name="Kollias G."/>
            <person name="Krishnan S.P."/>
            <person name="Kruger A."/>
            <person name="Kummerfeld S.K."/>
            <person name="Kurochkin I.V."/>
            <person name="Lareau L.F."/>
            <person name="Lazarevic D."/>
            <person name="Lipovich L."/>
            <person name="Liu J."/>
            <person name="Liuni S."/>
            <person name="McWilliam S."/>
            <person name="Madan Babu M."/>
            <person name="Madera M."/>
            <person name="Marchionni L."/>
            <person name="Matsuda H."/>
            <person name="Matsuzawa S."/>
            <person name="Miki H."/>
            <person name="Mignone F."/>
            <person name="Miyake S."/>
            <person name="Morris K."/>
            <person name="Mottagui-Tabar S."/>
            <person name="Mulder N."/>
            <person name="Nakano N."/>
            <person name="Nakauchi H."/>
            <person name="Ng P."/>
            <person name="Nilsson R."/>
            <person name="Nishiguchi S."/>
            <person name="Nishikawa S."/>
            <person name="Nori F."/>
            <person name="Ohara O."/>
            <person name="Okazaki Y."/>
            <person name="Orlando V."/>
            <person name="Pang K.C."/>
            <person name="Pavan W.J."/>
            <person name="Pavesi G."/>
            <person name="Pesole G."/>
            <person name="Petrovsky N."/>
            <person name="Piazza S."/>
            <person name="Reed J."/>
            <person name="Reid J.F."/>
            <person name="Ring B.Z."/>
            <person name="Ringwald M."/>
            <person name="Rost B."/>
            <person name="Ruan Y."/>
            <person name="Salzberg S.L."/>
            <person name="Sandelin A."/>
            <person name="Schneider C."/>
            <person name="Schoenbach C."/>
            <person name="Sekiguchi K."/>
            <person name="Semple C.A."/>
            <person name="Seno S."/>
            <person name="Sessa L."/>
            <person name="Sheng Y."/>
            <person name="Shibata Y."/>
            <person name="Shimada H."/>
            <person name="Shimada K."/>
            <person name="Silva D."/>
            <person name="Sinclair B."/>
            <person name="Sperling S."/>
            <person name="Stupka E."/>
            <person name="Sugiura K."/>
            <person name="Sultana R."/>
            <person name="Takenaka Y."/>
            <person name="Taki K."/>
            <person name="Tammoja K."/>
            <person name="Tan S.L."/>
            <person name="Tang S."/>
            <person name="Taylor M.S."/>
            <person name="Tegner J."/>
            <person name="Teichmann S.A."/>
            <person name="Ueda H.R."/>
            <person name="van Nimwegen E."/>
            <person name="Verardo R."/>
            <person name="Wei C.L."/>
            <person name="Yagi K."/>
            <person name="Yamanishi H."/>
            <person name="Zabarovsky E."/>
            <person name="Zhu S."/>
            <person name="Zimmer A."/>
            <person name="Hide W."/>
            <person name="Bult C."/>
            <person name="Grimmond S.M."/>
            <person name="Teasdale R.D."/>
            <person name="Liu E.T."/>
            <person name="Brusic V."/>
            <person name="Quackenbush J."/>
            <person name="Wahlestedt C."/>
            <person name="Mattick J.S."/>
            <person name="Hume D.A."/>
            <person name="Kai C."/>
            <person name="Sasaki D."/>
            <person name="Tomaru Y."/>
            <person name="Fukuda S."/>
            <person name="Kanamori-Katayama M."/>
            <person name="Suzuki M."/>
            <person name="Aoki J."/>
            <person name="Arakawa T."/>
            <person name="Iida J."/>
            <person name="Imamura K."/>
            <person name="Itoh M."/>
            <person name="Kato T."/>
            <person name="Kawaji H."/>
            <person name="Kawagashira N."/>
            <person name="Kawashima T."/>
            <person name="Kojima M."/>
            <person name="Kondo S."/>
            <person name="Konno H."/>
            <person name="Nakano K."/>
            <person name="Ninomiya N."/>
            <person name="Nishio T."/>
            <person name="Okada M."/>
            <person name="Plessy C."/>
            <person name="Shibata K."/>
            <person name="Shiraki T."/>
            <person name="Suzuki S."/>
            <person name="Tagami M."/>
            <person name="Waki K."/>
            <person name="Watahiki A."/>
            <person name="Okamura-Oho Y."/>
            <person name="Suzuki H."/>
            <person name="Kawai J."/>
            <person name="Hayashizaki Y."/>
        </authorList>
    </citation>
    <scope>NUCLEOTIDE SEQUENCE [LARGE SCALE MRNA]</scope>
    <source>
        <strain>C57BL/6J</strain>
        <tissue>Bone marrow</tissue>
        <tissue>Kidney</tissue>
    </source>
</reference>
<reference key="4">
    <citation type="journal article" date="2009" name="PLoS Biol.">
        <title>Lineage-specific biology revealed by a finished genome assembly of the mouse.</title>
        <authorList>
            <person name="Church D.M."/>
            <person name="Goodstadt L."/>
            <person name="Hillier L.W."/>
            <person name="Zody M.C."/>
            <person name="Goldstein S."/>
            <person name="She X."/>
            <person name="Bult C.J."/>
            <person name="Agarwala R."/>
            <person name="Cherry J.L."/>
            <person name="DiCuccio M."/>
            <person name="Hlavina W."/>
            <person name="Kapustin Y."/>
            <person name="Meric P."/>
            <person name="Maglott D."/>
            <person name="Birtle Z."/>
            <person name="Marques A.C."/>
            <person name="Graves T."/>
            <person name="Zhou S."/>
            <person name="Teague B."/>
            <person name="Potamousis K."/>
            <person name="Churas C."/>
            <person name="Place M."/>
            <person name="Herschleb J."/>
            <person name="Runnheim R."/>
            <person name="Forrest D."/>
            <person name="Amos-Landgraf J."/>
            <person name="Schwartz D.C."/>
            <person name="Cheng Z."/>
            <person name="Lindblad-Toh K."/>
            <person name="Eichler E.E."/>
            <person name="Ponting C.P."/>
        </authorList>
    </citation>
    <scope>NUCLEOTIDE SEQUENCE [LARGE SCALE GENOMIC DNA]</scope>
    <source>
        <strain>C57BL/6J</strain>
    </source>
</reference>
<reference key="5">
    <citation type="journal article" date="2004" name="Genome Res.">
        <title>The status, quality, and expansion of the NIH full-length cDNA project: the Mammalian Gene Collection (MGC).</title>
        <authorList>
            <consortium name="The MGC Project Team"/>
        </authorList>
    </citation>
    <scope>NUCLEOTIDE SEQUENCE [LARGE SCALE MRNA]</scope>
    <source>
        <strain>FVB/N-3</strain>
        <tissue>Mammary tumor</tissue>
    </source>
</reference>
<reference key="6">
    <citation type="submission" date="2005-07" db="EMBL/GenBank/DDBJ databases">
        <authorList>
            <person name="Mural R.J."/>
            <person name="Adams M.D."/>
            <person name="Myers E.W."/>
            <person name="Smith H.O."/>
            <person name="Venter J.C."/>
        </authorList>
    </citation>
    <scope>NUCLEOTIDE SEQUENCE [LARGE SCALE GENOMIC DNA]</scope>
</reference>
<reference key="7">
    <citation type="journal article" date="1993" name="J. Mol. Evol.">
        <title>Region-specific rates of molecular evolution: a fourfold reduction in the rate of accumulation of 'silent' mutations in transcribed versus nontranscribed regions of homologous DNA fragments derived from two closely related mouse species.</title>
        <authorList>
            <person name="Turker M.S."/>
            <person name="Cooper G.E."/>
            <person name="Bishop P.L."/>
        </authorList>
    </citation>
    <scope>NUCLEOTIDE SEQUENCE [GENOMIC DNA] OF 63-133</scope>
</reference>
<reference key="8">
    <citation type="journal article" date="2009" name="Mol. Cell. Proteomics">
        <title>Large scale localization of protein phosphorylation by use of electron capture dissociation mass spectrometry.</title>
        <authorList>
            <person name="Sweet S.M."/>
            <person name="Bailey C.M."/>
            <person name="Cunningham D.L."/>
            <person name="Heath J.K."/>
            <person name="Cooper H.J."/>
        </authorList>
    </citation>
    <scope>PHOSPHORYLATION [LARGE SCALE ANALYSIS] AT SER-15</scope>
    <scope>IDENTIFICATION BY MASS SPECTROMETRY [LARGE SCALE ANALYSIS]</scope>
    <source>
        <tissue>Embryonic fibroblast</tissue>
    </source>
</reference>
<reference key="9">
    <citation type="journal article" date="2010" name="Cell">
        <title>A tissue-specific atlas of mouse protein phosphorylation and expression.</title>
        <authorList>
            <person name="Huttlin E.L."/>
            <person name="Jedrychowski M.P."/>
            <person name="Elias J.E."/>
            <person name="Goswami T."/>
            <person name="Rad R."/>
            <person name="Beausoleil S.A."/>
            <person name="Villen J."/>
            <person name="Haas W."/>
            <person name="Sowa M.E."/>
            <person name="Gygi S.P."/>
        </authorList>
    </citation>
    <scope>IDENTIFICATION BY MASS SPECTROMETRY [LARGE SCALE ANALYSIS]</scope>
    <source>
        <tissue>Brain</tissue>
        <tissue>Brown adipose tissue</tissue>
        <tissue>Heart</tissue>
        <tissue>Kidney</tissue>
        <tissue>Liver</tissue>
        <tissue>Lung</tissue>
        <tissue>Pancreas</tissue>
        <tissue>Spleen</tissue>
        <tissue>Testis</tissue>
    </source>
</reference>
<proteinExistence type="evidence at protein level"/>
<accession>P08030</accession>
<accession>Q564P4</accession>
<accession>Q61319</accession>
<accession>Q6PK77</accession>
<accession>Q9DCY3</accession>